<gene>
    <name type="primary">PCDHB10</name>
</gene>
<protein>
    <recommendedName>
        <fullName>Protocadherin beta-10</fullName>
        <shortName>PCDH-beta-10</shortName>
    </recommendedName>
</protein>
<proteinExistence type="inferred from homology"/>
<dbReference type="RefSeq" id="NP_001013039.1">
    <property type="nucleotide sequence ID" value="NM_001013021.2"/>
</dbReference>
<dbReference type="SMR" id="Q5DRD9"/>
<dbReference type="FunCoup" id="Q5DRD9">
    <property type="interactions" value="63"/>
</dbReference>
<dbReference type="STRING" id="9598.ENSPTRP00000054380"/>
<dbReference type="GlyCosmos" id="Q5DRD9">
    <property type="glycosylation" value="4 sites, No reported glycans"/>
</dbReference>
<dbReference type="PaxDb" id="9598-ENSPTRP00000047955"/>
<dbReference type="GeneID" id="503665"/>
<dbReference type="KEGG" id="ptr:503665"/>
<dbReference type="CTD" id="56126"/>
<dbReference type="eggNOG" id="KOG3594">
    <property type="taxonomic scope" value="Eukaryota"/>
</dbReference>
<dbReference type="HOGENOM" id="CLU_006480_3_0_1"/>
<dbReference type="InParanoid" id="Q5DRD9"/>
<dbReference type="OrthoDB" id="7643at9604"/>
<dbReference type="TreeFam" id="TF332299"/>
<dbReference type="Proteomes" id="UP000002277">
    <property type="component" value="Unplaced"/>
</dbReference>
<dbReference type="GO" id="GO:0005886">
    <property type="term" value="C:plasma membrane"/>
    <property type="evidence" value="ECO:0000318"/>
    <property type="project" value="GO_Central"/>
</dbReference>
<dbReference type="GO" id="GO:0005509">
    <property type="term" value="F:calcium ion binding"/>
    <property type="evidence" value="ECO:0007669"/>
    <property type="project" value="InterPro"/>
</dbReference>
<dbReference type="GO" id="GO:0007155">
    <property type="term" value="P:cell adhesion"/>
    <property type="evidence" value="ECO:0000318"/>
    <property type="project" value="GO_Central"/>
</dbReference>
<dbReference type="GO" id="GO:0007156">
    <property type="term" value="P:homophilic cell adhesion via plasma membrane adhesion molecules"/>
    <property type="evidence" value="ECO:0007669"/>
    <property type="project" value="InterPro"/>
</dbReference>
<dbReference type="GO" id="GO:0007399">
    <property type="term" value="P:nervous system development"/>
    <property type="evidence" value="ECO:0007669"/>
    <property type="project" value="UniProtKB-ARBA"/>
</dbReference>
<dbReference type="CDD" id="cd11304">
    <property type="entry name" value="Cadherin_repeat"/>
    <property type="match status" value="5"/>
</dbReference>
<dbReference type="FunFam" id="2.60.40.60:FF:000001">
    <property type="entry name" value="Protocadherin alpha 2"/>
    <property type="match status" value="1"/>
</dbReference>
<dbReference type="FunFam" id="2.60.40.60:FF:000002">
    <property type="entry name" value="Protocadherin alpha 2"/>
    <property type="match status" value="1"/>
</dbReference>
<dbReference type="FunFam" id="2.60.40.60:FF:000006">
    <property type="entry name" value="Protocadherin alpha 2"/>
    <property type="match status" value="1"/>
</dbReference>
<dbReference type="FunFam" id="2.60.40.60:FF:000046">
    <property type="entry name" value="Protocadherin beta 5"/>
    <property type="match status" value="1"/>
</dbReference>
<dbReference type="FunFam" id="2.60.40.60:FF:000309">
    <property type="entry name" value="Protocadherin beta-8"/>
    <property type="match status" value="1"/>
</dbReference>
<dbReference type="FunFam" id="2.60.40.60:FF:000018">
    <property type="entry name" value="Protocadherin gamma c3"/>
    <property type="match status" value="1"/>
</dbReference>
<dbReference type="Gene3D" id="2.60.40.60">
    <property type="entry name" value="Cadherins"/>
    <property type="match status" value="6"/>
</dbReference>
<dbReference type="InterPro" id="IPR002126">
    <property type="entry name" value="Cadherin-like_dom"/>
</dbReference>
<dbReference type="InterPro" id="IPR015919">
    <property type="entry name" value="Cadherin-like_sf"/>
</dbReference>
<dbReference type="InterPro" id="IPR032455">
    <property type="entry name" value="Cadherin_C"/>
</dbReference>
<dbReference type="InterPro" id="IPR020894">
    <property type="entry name" value="Cadherin_CS"/>
</dbReference>
<dbReference type="InterPro" id="IPR013164">
    <property type="entry name" value="Cadherin_N"/>
</dbReference>
<dbReference type="InterPro" id="IPR050174">
    <property type="entry name" value="Protocadherin/Cadherin-CA"/>
</dbReference>
<dbReference type="PANTHER" id="PTHR24028">
    <property type="entry name" value="CADHERIN-87A"/>
    <property type="match status" value="1"/>
</dbReference>
<dbReference type="PANTHER" id="PTHR24028:SF54">
    <property type="entry name" value="PROTOCADHERIN BETA-10"/>
    <property type="match status" value="1"/>
</dbReference>
<dbReference type="Pfam" id="PF00028">
    <property type="entry name" value="Cadherin"/>
    <property type="match status" value="5"/>
</dbReference>
<dbReference type="Pfam" id="PF08266">
    <property type="entry name" value="Cadherin_2"/>
    <property type="match status" value="1"/>
</dbReference>
<dbReference type="Pfam" id="PF16492">
    <property type="entry name" value="Cadherin_C_2"/>
    <property type="match status" value="1"/>
</dbReference>
<dbReference type="PRINTS" id="PR00205">
    <property type="entry name" value="CADHERIN"/>
</dbReference>
<dbReference type="SMART" id="SM00112">
    <property type="entry name" value="CA"/>
    <property type="match status" value="5"/>
</dbReference>
<dbReference type="SUPFAM" id="SSF49313">
    <property type="entry name" value="Cadherin-like"/>
    <property type="match status" value="6"/>
</dbReference>
<dbReference type="PROSITE" id="PS00232">
    <property type="entry name" value="CADHERIN_1"/>
    <property type="match status" value="5"/>
</dbReference>
<dbReference type="PROSITE" id="PS50268">
    <property type="entry name" value="CADHERIN_2"/>
    <property type="match status" value="6"/>
</dbReference>
<organism>
    <name type="scientific">Pan troglodytes</name>
    <name type="common">Chimpanzee</name>
    <dbReference type="NCBI Taxonomy" id="9598"/>
    <lineage>
        <taxon>Eukaryota</taxon>
        <taxon>Metazoa</taxon>
        <taxon>Chordata</taxon>
        <taxon>Craniata</taxon>
        <taxon>Vertebrata</taxon>
        <taxon>Euteleostomi</taxon>
        <taxon>Mammalia</taxon>
        <taxon>Eutheria</taxon>
        <taxon>Euarchontoglires</taxon>
        <taxon>Primates</taxon>
        <taxon>Haplorrhini</taxon>
        <taxon>Catarrhini</taxon>
        <taxon>Hominidae</taxon>
        <taxon>Pan</taxon>
    </lineage>
</organism>
<feature type="signal peptide" evidence="1">
    <location>
        <begin position="1"/>
        <end position="26"/>
    </location>
</feature>
<feature type="chain" id="PRO_0000003933" description="Protocadherin beta-10">
    <location>
        <begin position="27"/>
        <end position="798"/>
    </location>
</feature>
<feature type="topological domain" description="Extracellular" evidence="2">
    <location>
        <begin position="27"/>
        <end position="690"/>
    </location>
</feature>
<feature type="transmembrane region" description="Helical" evidence="2">
    <location>
        <begin position="691"/>
        <end position="711"/>
    </location>
</feature>
<feature type="topological domain" description="Cytoplasmic" evidence="2">
    <location>
        <begin position="712"/>
        <end position="798"/>
    </location>
</feature>
<feature type="domain" description="Cadherin 1" evidence="3">
    <location>
        <begin position="35"/>
        <end position="133"/>
    </location>
</feature>
<feature type="domain" description="Cadherin 2" evidence="3">
    <location>
        <begin position="138"/>
        <end position="242"/>
    </location>
</feature>
<feature type="domain" description="Cadherin 3" evidence="3">
    <location>
        <begin position="247"/>
        <end position="347"/>
    </location>
</feature>
<feature type="domain" description="Cadherin 4" evidence="3">
    <location>
        <begin position="352"/>
        <end position="451"/>
    </location>
</feature>
<feature type="domain" description="Cadherin 5" evidence="3">
    <location>
        <begin position="456"/>
        <end position="561"/>
    </location>
</feature>
<feature type="domain" description="Cadherin 6" evidence="3">
    <location>
        <begin position="568"/>
        <end position="671"/>
    </location>
</feature>
<feature type="glycosylation site" description="N-linked (GlcNAc...) asparagine" evidence="2">
    <location>
        <position position="169"/>
    </location>
</feature>
<feature type="glycosylation site" description="N-linked (GlcNAc...) asparagine" evidence="2">
    <location>
        <position position="418"/>
    </location>
</feature>
<feature type="glycosylation site" description="N-linked (GlcNAc...) asparagine" evidence="2">
    <location>
        <position position="436"/>
    </location>
</feature>
<feature type="glycosylation site" description="N-linked (GlcNAc...) asparagine" evidence="2">
    <location>
        <position position="567"/>
    </location>
</feature>
<sequence length="798" mass="87239">MAVRELCFSRQRQVLFLFLFWGVSLAGSGFGRYSVTEETEKGSFVVNLAKDLGLAEGKLAARGTRVVSDDNKQYLLLDSHTGNLLTNEKLDREKLCGPKEPCMLYFQILMDDPFQIYRAELRVRDINDHAPVFQDKETVLKISENTAEGTAFRLERAQDPDGGLNGIQNYTISPNSFFHIKISGSDEGMIYPELVLDKALDREEQEELSLTLTALDGGSPSRSGTSTVRIVVLDVNDNAPQFAQALYETQAPENSPIGFLIVKVSAEDVDSGVNAEVSYSFFDASENIRTTFQINPFSGEIFLRELLDYELVNSYKINIQAMDGGGLSARCRVLVEVLDTNDNPPELIVSSFSNSVAENSPETPLAVFKINDRDSGENGKMVCYIQENLPFLLKPSVENFYILITEGALDRELRAEYNITITVTDLGTPRLKTEHNITVLVSDVNDNAPAFTQTSYTLFVRENNSPALHIGSVSATDGDSGTNAQVTYSLLPPQDLHLPLASLVSINADNGHLFALRSLDYEALQAFEFRVGATDRGSPALSSEALVRVLVLDANDNSPFVLYPLQNGSAPCTELVPRAAEPGYLVTKVVAVDGDSGQNAWLSYQLLKATEPGLFGVWAHNGEVRTARLLSERDAAKHRLVVLVKDNGEPPRSATATLHLLLVDGFSQPYLPLPEAAPAQAQADLLTVYLVVALASVSSLFLFSVLLFVAVRLCRRSRAASVGRCSVPEGPFPGHLVDVSGAETLSQSYQYEVCLTGGPGTSEFKFLKPVISDIQAQGPGRKGEENSTFRNSFGFNIQ</sequence>
<evidence type="ECO:0000250" key="1"/>
<evidence type="ECO:0000255" key="2"/>
<evidence type="ECO:0000255" key="3">
    <source>
        <dbReference type="PROSITE-ProRule" id="PRU00043"/>
    </source>
</evidence>
<reference key="1">
    <citation type="journal article" date="2005" name="Nature">
        <title>Initial sequence of the chimpanzee genome and comparison with the human genome.</title>
        <authorList>
            <consortium name="Chimpanzee sequencing and analysis consortium"/>
        </authorList>
    </citation>
    <scope>NUCLEOTIDE SEQUENCE [LARGE SCALE GENOMIC DNA]</scope>
</reference>
<reference key="2">
    <citation type="journal article" date="2005" name="Genetics">
        <title>Comparative genomics and diversifying selection of the clustered vertebrate protocadherin genes.</title>
        <authorList>
            <person name="Wu Q."/>
        </authorList>
    </citation>
    <scope>IDENTIFICATION</scope>
</reference>
<accession>Q5DRD9</accession>
<keyword id="KW-0106">Calcium</keyword>
<keyword id="KW-0130">Cell adhesion</keyword>
<keyword id="KW-1003">Cell membrane</keyword>
<keyword id="KW-0325">Glycoprotein</keyword>
<keyword id="KW-0472">Membrane</keyword>
<keyword id="KW-1185">Reference proteome</keyword>
<keyword id="KW-0677">Repeat</keyword>
<keyword id="KW-0732">Signal</keyword>
<keyword id="KW-0812">Transmembrane</keyword>
<keyword id="KW-1133">Transmembrane helix</keyword>
<name>PCDBA_PANTR</name>
<comment type="function">
    <text>Potential calcium-dependent cell-adhesion protein. May be involved in the establishment and maintenance of specific neuronal connections in the brain.</text>
</comment>
<comment type="subcellular location">
    <subcellularLocation>
        <location evidence="1">Cell membrane</location>
        <topology evidence="1">Single-pass type I membrane protein</topology>
    </subcellularLocation>
</comment>